<reference key="1">
    <citation type="journal article" date="2001" name="Nature">
        <title>Genome sequence of enterohaemorrhagic Escherichia coli O157:H7.</title>
        <authorList>
            <person name="Perna N.T."/>
            <person name="Plunkett G. III"/>
            <person name="Burland V."/>
            <person name="Mau B."/>
            <person name="Glasner J.D."/>
            <person name="Rose D.J."/>
            <person name="Mayhew G.F."/>
            <person name="Evans P.S."/>
            <person name="Gregor J."/>
            <person name="Kirkpatrick H.A."/>
            <person name="Posfai G."/>
            <person name="Hackett J."/>
            <person name="Klink S."/>
            <person name="Boutin A."/>
            <person name="Shao Y."/>
            <person name="Miller L."/>
            <person name="Grotbeck E.J."/>
            <person name="Davis N.W."/>
            <person name="Lim A."/>
            <person name="Dimalanta E.T."/>
            <person name="Potamousis K."/>
            <person name="Apodaca J."/>
            <person name="Anantharaman T.S."/>
            <person name="Lin J."/>
            <person name="Yen G."/>
            <person name="Schwartz D.C."/>
            <person name="Welch R.A."/>
            <person name="Blattner F.R."/>
        </authorList>
    </citation>
    <scope>NUCLEOTIDE SEQUENCE [LARGE SCALE GENOMIC DNA]</scope>
    <source>
        <strain>O157:H7 / EDL933 / ATCC 700927 / EHEC</strain>
    </source>
</reference>
<reference key="2">
    <citation type="journal article" date="2001" name="DNA Res.">
        <title>Complete genome sequence of enterohemorrhagic Escherichia coli O157:H7 and genomic comparison with a laboratory strain K-12.</title>
        <authorList>
            <person name="Hayashi T."/>
            <person name="Makino K."/>
            <person name="Ohnishi M."/>
            <person name="Kurokawa K."/>
            <person name="Ishii K."/>
            <person name="Yokoyama K."/>
            <person name="Han C.-G."/>
            <person name="Ohtsubo E."/>
            <person name="Nakayama K."/>
            <person name="Murata T."/>
            <person name="Tanaka M."/>
            <person name="Tobe T."/>
            <person name="Iida T."/>
            <person name="Takami H."/>
            <person name="Honda T."/>
            <person name="Sasakawa C."/>
            <person name="Ogasawara N."/>
            <person name="Yasunaga T."/>
            <person name="Kuhara S."/>
            <person name="Shiba T."/>
            <person name="Hattori M."/>
            <person name="Shinagawa H."/>
        </authorList>
    </citation>
    <scope>NUCLEOTIDE SEQUENCE [LARGE SCALE GENOMIC DNA]</scope>
    <source>
        <strain>O157:H7 / Sakai / RIMD 0509952 / EHEC</strain>
    </source>
</reference>
<feature type="chain" id="PRO_0000114519" description="Alanine racemase, catabolic">
    <location>
        <begin position="1"/>
        <end position="356"/>
    </location>
</feature>
<feature type="active site" description="Proton acceptor; specific for D-alanine" evidence="1">
    <location>
        <position position="35"/>
    </location>
</feature>
<feature type="active site" description="Proton acceptor; specific for L-alanine" evidence="1">
    <location>
        <position position="253"/>
    </location>
</feature>
<feature type="binding site" evidence="1">
    <location>
        <position position="130"/>
    </location>
    <ligand>
        <name>substrate</name>
    </ligand>
</feature>
<feature type="binding site" evidence="1">
    <location>
        <position position="301"/>
    </location>
    <ligand>
        <name>substrate</name>
    </ligand>
</feature>
<feature type="modified residue" description="N6-(pyridoxal phosphate)lysine" evidence="1">
    <location>
        <position position="35"/>
    </location>
</feature>
<feature type="sequence conflict" description="In Ref. 2; BAB35108." evidence="2" ref="2">
    <original>AG</original>
    <variation>RD</variation>
    <location>
        <begin position="314"/>
        <end position="315"/>
    </location>
</feature>
<protein>
    <recommendedName>
        <fullName>Alanine racemase, catabolic</fullName>
        <ecNumber>5.1.1.1</ecNumber>
    </recommendedName>
</protein>
<sequence length="356" mass="38859">MTRPIQASLDLQALKQNLSIVRQAAPHARVWSVVKANAYGHGIERIWSALGATDGFALLNLEEAITLRERGWKGPILMLEGFFHAQDLEMYDQHRLTTCVHSNWQLKALQNARLKAPLDIYLKVNSGMNRLGFQPDRVLTVWQQLRAMANVGEMTLMSHFAEAEHPDGISGAMARIEQAAEGLECRRSLSNSAATLWHPEAHFDWVRPGIILYGASPSGQWRDIANTGLRPVMTLSSEIIGVQTLKAGERVGYGGRYTARDEQRIGIVAAGYADGYPRHAPTGTPVLVDGVRTMTVGTVSMDMLAVDLTPCPQAGIGTPVELWGKEIKIDDVAAAAGTVGYELMCALALRVPVVTV</sequence>
<dbReference type="EC" id="5.1.1.1"/>
<dbReference type="EMBL" id="AE005174">
    <property type="protein sequence ID" value="AAG56041.1"/>
    <property type="molecule type" value="Genomic_DNA"/>
</dbReference>
<dbReference type="EMBL" id="BA000007">
    <property type="protein sequence ID" value="BAB35108.1"/>
    <property type="status" value="ALT_FRAME"/>
    <property type="molecule type" value="Genomic_DNA"/>
</dbReference>
<dbReference type="PIR" id="E85697">
    <property type="entry name" value="E85697"/>
</dbReference>
<dbReference type="PIR" id="E90839">
    <property type="entry name" value="E90839"/>
</dbReference>
<dbReference type="RefSeq" id="WP_000197859.1">
    <property type="nucleotide sequence ID" value="NZ_VOAI01000042.1"/>
</dbReference>
<dbReference type="SMR" id="Q8X4I9"/>
<dbReference type="STRING" id="155864.Z1953"/>
<dbReference type="KEGG" id="ece:Z1953"/>
<dbReference type="PATRIC" id="fig|83334.175.peg.4325"/>
<dbReference type="eggNOG" id="COG0787">
    <property type="taxonomic scope" value="Bacteria"/>
</dbReference>
<dbReference type="HOGENOM" id="CLU_028393_1_0_6"/>
<dbReference type="OMA" id="HMTHFSD"/>
<dbReference type="Proteomes" id="UP000000558">
    <property type="component" value="Chromosome"/>
</dbReference>
<dbReference type="Proteomes" id="UP000002519">
    <property type="component" value="Chromosome"/>
</dbReference>
<dbReference type="GO" id="GO:0005829">
    <property type="term" value="C:cytosol"/>
    <property type="evidence" value="ECO:0007669"/>
    <property type="project" value="TreeGrafter"/>
</dbReference>
<dbReference type="GO" id="GO:0008784">
    <property type="term" value="F:alanine racemase activity"/>
    <property type="evidence" value="ECO:0007669"/>
    <property type="project" value="UniProtKB-UniRule"/>
</dbReference>
<dbReference type="GO" id="GO:0030170">
    <property type="term" value="F:pyridoxal phosphate binding"/>
    <property type="evidence" value="ECO:0007669"/>
    <property type="project" value="UniProtKB-UniRule"/>
</dbReference>
<dbReference type="GO" id="GO:0030632">
    <property type="term" value="P:D-alanine biosynthetic process"/>
    <property type="evidence" value="ECO:0007669"/>
    <property type="project" value="UniProtKB-UniRule"/>
</dbReference>
<dbReference type="CDD" id="cd06827">
    <property type="entry name" value="PLPDE_III_AR_proteobact"/>
    <property type="match status" value="1"/>
</dbReference>
<dbReference type="FunFam" id="2.40.37.10:FF:000002">
    <property type="entry name" value="Alanine racemase"/>
    <property type="match status" value="1"/>
</dbReference>
<dbReference type="FunFam" id="3.20.20.10:FF:000002">
    <property type="entry name" value="Alanine racemase"/>
    <property type="match status" value="1"/>
</dbReference>
<dbReference type="Gene3D" id="3.20.20.10">
    <property type="entry name" value="Alanine racemase"/>
    <property type="match status" value="1"/>
</dbReference>
<dbReference type="Gene3D" id="2.40.37.10">
    <property type="entry name" value="Lyase, Ornithine Decarboxylase, Chain A, domain 1"/>
    <property type="match status" value="1"/>
</dbReference>
<dbReference type="HAMAP" id="MF_01201">
    <property type="entry name" value="Ala_racemase"/>
    <property type="match status" value="1"/>
</dbReference>
<dbReference type="InterPro" id="IPR000821">
    <property type="entry name" value="Ala_racemase"/>
</dbReference>
<dbReference type="InterPro" id="IPR009006">
    <property type="entry name" value="Ala_racemase/Decarboxylase_C"/>
</dbReference>
<dbReference type="InterPro" id="IPR011079">
    <property type="entry name" value="Ala_racemase_C"/>
</dbReference>
<dbReference type="InterPro" id="IPR001608">
    <property type="entry name" value="Ala_racemase_N"/>
</dbReference>
<dbReference type="InterPro" id="IPR020622">
    <property type="entry name" value="Ala_racemase_pyridoxalP-BS"/>
</dbReference>
<dbReference type="InterPro" id="IPR029066">
    <property type="entry name" value="PLP-binding_barrel"/>
</dbReference>
<dbReference type="NCBIfam" id="TIGR00492">
    <property type="entry name" value="alr"/>
    <property type="match status" value="1"/>
</dbReference>
<dbReference type="NCBIfam" id="NF002970">
    <property type="entry name" value="PRK03646.1"/>
    <property type="match status" value="1"/>
</dbReference>
<dbReference type="PANTHER" id="PTHR30511">
    <property type="entry name" value="ALANINE RACEMASE"/>
    <property type="match status" value="1"/>
</dbReference>
<dbReference type="PANTHER" id="PTHR30511:SF0">
    <property type="entry name" value="ALANINE RACEMASE, CATABOLIC-RELATED"/>
    <property type="match status" value="1"/>
</dbReference>
<dbReference type="Pfam" id="PF00842">
    <property type="entry name" value="Ala_racemase_C"/>
    <property type="match status" value="1"/>
</dbReference>
<dbReference type="Pfam" id="PF01168">
    <property type="entry name" value="Ala_racemase_N"/>
    <property type="match status" value="1"/>
</dbReference>
<dbReference type="PRINTS" id="PR00992">
    <property type="entry name" value="ALARACEMASE"/>
</dbReference>
<dbReference type="SMART" id="SM01005">
    <property type="entry name" value="Ala_racemase_C"/>
    <property type="match status" value="1"/>
</dbReference>
<dbReference type="SUPFAM" id="SSF50621">
    <property type="entry name" value="Alanine racemase C-terminal domain-like"/>
    <property type="match status" value="1"/>
</dbReference>
<dbReference type="SUPFAM" id="SSF51419">
    <property type="entry name" value="PLP-binding barrel"/>
    <property type="match status" value="1"/>
</dbReference>
<dbReference type="PROSITE" id="PS00395">
    <property type="entry name" value="ALANINE_RACEMASE"/>
    <property type="match status" value="1"/>
</dbReference>
<gene>
    <name type="primary">dadX</name>
    <name type="synonym">dadB</name>
    <name type="ordered locus">Z1953</name>
    <name type="ordered locus">ECs1685</name>
</gene>
<evidence type="ECO:0000250" key="1"/>
<evidence type="ECO:0000305" key="2"/>
<proteinExistence type="inferred from homology"/>
<keyword id="KW-0413">Isomerase</keyword>
<keyword id="KW-0663">Pyridoxal phosphate</keyword>
<keyword id="KW-1185">Reference proteome</keyword>
<organism>
    <name type="scientific">Escherichia coli O157:H7</name>
    <dbReference type="NCBI Taxonomy" id="83334"/>
    <lineage>
        <taxon>Bacteria</taxon>
        <taxon>Pseudomonadati</taxon>
        <taxon>Pseudomonadota</taxon>
        <taxon>Gammaproteobacteria</taxon>
        <taxon>Enterobacterales</taxon>
        <taxon>Enterobacteriaceae</taxon>
        <taxon>Escherichia</taxon>
    </lineage>
</organism>
<accession>Q8X4I9</accession>
<accession>Q8X2W4</accession>
<comment type="function">
    <text evidence="1">Isomerizes L-alanine to D-alanine which is then oxidized to pyruvate by DadA.</text>
</comment>
<comment type="catalytic activity">
    <reaction>
        <text>L-alanine = D-alanine</text>
        <dbReference type="Rhea" id="RHEA:20249"/>
        <dbReference type="ChEBI" id="CHEBI:57416"/>
        <dbReference type="ChEBI" id="CHEBI:57972"/>
        <dbReference type="EC" id="5.1.1.1"/>
    </reaction>
</comment>
<comment type="cofactor">
    <cofactor evidence="1">
        <name>pyridoxal 5'-phosphate</name>
        <dbReference type="ChEBI" id="CHEBI:597326"/>
    </cofactor>
</comment>
<comment type="similarity">
    <text evidence="2">Belongs to the alanine racemase family.</text>
</comment>
<comment type="sequence caution" evidence="2">
    <conflict type="frameshift">
        <sequence resource="EMBL-CDS" id="BAB35108"/>
    </conflict>
</comment>
<name>ALR2_ECO57</name>